<accession>Q3LXA3</accession>
<accession>Q2L9C1</accession>
<accession>Q53EQ9</accession>
<accession>Q9BVA7</accession>
<accession>Q9H895</accession>
<name>TKFC_HUMAN</name>
<protein>
    <recommendedName>
        <fullName evidence="17">Triokinase/FMN cyclase</fullName>
    </recommendedName>
    <alternativeName>
        <fullName>Bifunctional ATP-dependent dihydroxyacetone kinase/FAD-AMP lyase (cyclizing)</fullName>
    </alternativeName>
    <domain>
        <recommendedName>
            <fullName>ATP-dependent dihydroxyacetone kinase</fullName>
            <shortName>DHA kinase</shortName>
            <ecNumber evidence="11">2.7.1.28</ecNumber>
            <ecNumber evidence="11">2.7.1.29</ecNumber>
        </recommendedName>
        <alternativeName>
            <fullName>Glycerone kinase</fullName>
        </alternativeName>
        <alternativeName>
            <fullName>Triokinase</fullName>
        </alternativeName>
        <alternativeName>
            <fullName>Triose kinase</fullName>
        </alternativeName>
    </domain>
    <domain>
        <recommendedName>
            <fullName>FAD-AMP lyase (cyclizing)</fullName>
            <ecNumber>4.6.1.15</ecNumber>
        </recommendedName>
        <alternativeName>
            <fullName>FAD-AMP lyase (cyclic FMN forming)</fullName>
        </alternativeName>
        <alternativeName>
            <fullName>FMN cyclase</fullName>
        </alternativeName>
    </domain>
</protein>
<feature type="chain" id="PRO_0000121525" description="Triokinase/FMN cyclase">
    <location>
        <begin position="1"/>
        <end position="575"/>
    </location>
</feature>
<feature type="domain" description="DhaK" evidence="5">
    <location>
        <begin position="9"/>
        <end position="336"/>
    </location>
</feature>
<feature type="domain" description="DhaL" evidence="4">
    <location>
        <begin position="372"/>
        <end position="571"/>
    </location>
</feature>
<feature type="region of interest" description="Disordered" evidence="6">
    <location>
        <begin position="348"/>
        <end position="367"/>
    </location>
</feature>
<feature type="active site" description="Tele-hemiaminal-histidine intermediate" evidence="5">
    <location>
        <position position="221"/>
    </location>
</feature>
<feature type="binding site" evidence="1">
    <location>
        <begin position="56"/>
        <end position="59"/>
    </location>
    <ligand>
        <name>dihydroxyacetone</name>
        <dbReference type="ChEBI" id="CHEBI:16016"/>
    </ligand>
</feature>
<feature type="binding site" evidence="5">
    <location>
        <position position="109"/>
    </location>
    <ligand>
        <name>dihydroxyacetone</name>
        <dbReference type="ChEBI" id="CHEBI:16016"/>
    </ligand>
</feature>
<feature type="binding site" evidence="5">
    <location>
        <position position="114"/>
    </location>
    <ligand>
        <name>dihydroxyacetone</name>
        <dbReference type="ChEBI" id="CHEBI:16016"/>
    </ligand>
</feature>
<feature type="binding site" evidence="1">
    <location>
        <begin position="401"/>
        <end position="404"/>
    </location>
    <ligand>
        <name>ATP</name>
        <dbReference type="ChEBI" id="CHEBI:30616"/>
    </ligand>
</feature>
<feature type="binding site" evidence="1">
    <location>
        <begin position="446"/>
        <end position="447"/>
    </location>
    <ligand>
        <name>ATP</name>
        <dbReference type="ChEBI" id="CHEBI:30616"/>
    </ligand>
</feature>
<feature type="binding site" evidence="1">
    <location>
        <position position="486"/>
    </location>
    <ligand>
        <name>ATP</name>
        <dbReference type="ChEBI" id="CHEBI:30616"/>
    </ligand>
</feature>
<feature type="binding site" evidence="1">
    <location>
        <begin position="494"/>
        <end position="495"/>
    </location>
    <ligand>
        <name>ATP</name>
        <dbReference type="ChEBI" id="CHEBI:30616"/>
    </ligand>
</feature>
<feature type="binding site" evidence="1">
    <location>
        <begin position="556"/>
        <end position="558"/>
    </location>
    <ligand>
        <name>ATP</name>
        <dbReference type="ChEBI" id="CHEBI:30616"/>
    </ligand>
</feature>
<feature type="modified residue" description="Phosphoserine" evidence="18">
    <location>
        <position position="350"/>
    </location>
</feature>
<feature type="modified residue" description="Phosphoserine" evidence="18">
    <location>
        <position position="511"/>
    </location>
</feature>
<feature type="modified residue" description="Phosphoserine" evidence="3">
    <location>
        <position position="545"/>
    </location>
</feature>
<feature type="splice variant" id="VSP_057181" description="In isoform 2." evidence="15">
    <original>SAEAAAEATKNMEAGAGRASYISSARLEQPDPGAVAAAAILRAILEVLQS</original>
    <variation>EGGGLVICP</variation>
    <location>
        <begin position="526"/>
        <end position="575"/>
    </location>
</feature>
<feature type="sequence variant" id="VAR_028108" description="In dbSNP:rs2260655." evidence="7 8 13 14">
    <original>A</original>
    <variation>T</variation>
    <location>
        <position position="185"/>
    </location>
</feature>
<feature type="sequence variant" id="VAR_054780" description="In dbSNP:rs35723406.">
    <original>A</original>
    <variation>G</variation>
    <location>
        <position position="334"/>
    </location>
</feature>
<feature type="sequence variant" id="VAR_083849" description="In TKFCD; very severe decrease of triokinase and glycerone kinase activities; dbSNP:rs1590578831." evidence="11">
    <original>G</original>
    <variation>S</variation>
    <location>
        <position position="445"/>
    </location>
</feature>
<feature type="sequence variant" id="VAR_083850" description="In TKFCD; reduced protein levels in patient cells; very severe decrease of triokinase and glycerone kinase activities; dbSNP:rs547013163." evidence="11">
    <original>R</original>
    <variation>I</variation>
    <location>
        <position position="543"/>
    </location>
</feature>
<feature type="mutagenesis site" description="Highly decreases kinase activity. No effect on FMN cyclase activity." evidence="10">
    <original>T</original>
    <variation>A</variation>
    <location>
        <position position="112"/>
    </location>
</feature>
<feature type="mutagenesis site" description="Slightly decreases kinase activity. No effect on FMN cyclase activity." evidence="10">
    <original>K</original>
    <variation>A</variation>
    <location>
        <position position="204"/>
    </location>
</feature>
<feature type="mutagenesis site" description="Abolishes kinase activity but not FMN cyclase activity." evidence="10">
    <original>H</original>
    <variation>A</variation>
    <location>
        <position position="221"/>
    </location>
</feature>
<feature type="mutagenesis site" description="Abolishes both kinase and FMN cyclase activities." evidence="10">
    <original>D</original>
    <variation>A</variation>
    <location>
        <position position="401"/>
    </location>
</feature>
<feature type="mutagenesis site" description="Abolishes both kinase and FMN cyclase activities." evidence="10">
    <original>D</original>
    <variation>A</variation>
    <location>
        <position position="403"/>
    </location>
</feature>
<feature type="mutagenesis site" description="Decreases both kinase and FMN cyclase activities." evidence="10">
    <original>C</original>
    <variation>A</variation>
    <location>
        <position position="404"/>
    </location>
</feature>
<feature type="mutagenesis site" description="Decreases both kinase and FMN cyclase activities." evidence="10">
    <original>S</original>
    <variation>A</variation>
    <location>
        <position position="446"/>
    </location>
</feature>
<feature type="mutagenesis site" description="Abolishes both kinase and FMN cyclase activities." evidence="10">
    <original>D</original>
    <variation>A</variation>
    <location>
        <position position="556"/>
    </location>
</feature>
<feature type="sequence conflict" description="In Ref. 3; BAB14722." evidence="16" ref="3">
    <original>V</original>
    <variation>A</variation>
    <location>
        <position position="7"/>
    </location>
</feature>
<feature type="sequence conflict" description="In Ref. 4; BAD97300." evidence="16" ref="4">
    <original>A</original>
    <variation>S</variation>
    <location>
        <position position="19"/>
    </location>
</feature>
<feature type="sequence conflict" description="In Ref. 3; BAB14722." evidence="16" ref="3">
    <original>V</original>
    <variation>A</variation>
    <location>
        <position position="75"/>
    </location>
</feature>
<feature type="sequence conflict" description="In Ref. 3; BAB14722." evidence="16" ref="3">
    <original>L</original>
    <variation>P</variation>
    <location>
        <position position="376"/>
    </location>
</feature>
<feature type="sequence conflict" description="In Ref. 3; BAB14722." evidence="16" ref="3">
    <original>D</original>
    <variation>G</variation>
    <location>
        <position position="497"/>
    </location>
</feature>
<dbReference type="EC" id="2.7.1.28" evidence="11"/>
<dbReference type="EC" id="2.7.1.29" evidence="11"/>
<dbReference type="EC" id="4.6.1.15"/>
<dbReference type="EMBL" id="DQ138290">
    <property type="protein sequence ID" value="ABA10576.1"/>
    <property type="molecule type" value="mRNA"/>
</dbReference>
<dbReference type="EMBL" id="DQ344550">
    <property type="protein sequence ID" value="ABC70184.1"/>
    <property type="molecule type" value="mRNA"/>
</dbReference>
<dbReference type="EMBL" id="AK023915">
    <property type="protein sequence ID" value="BAB14722.1"/>
    <property type="molecule type" value="mRNA"/>
</dbReference>
<dbReference type="EMBL" id="AK223580">
    <property type="protein sequence ID" value="BAD97300.1"/>
    <property type="molecule type" value="mRNA"/>
</dbReference>
<dbReference type="EMBL" id="AP003108">
    <property type="status" value="NOT_ANNOTATED_CDS"/>
    <property type="molecule type" value="Genomic_DNA"/>
</dbReference>
<dbReference type="EMBL" id="BC001341">
    <property type="protein sequence ID" value="AAH01341.1"/>
    <property type="molecule type" value="mRNA"/>
</dbReference>
<dbReference type="CCDS" id="CCDS8003.1">
    <molecule id="Q3LXA3-1"/>
</dbReference>
<dbReference type="RefSeq" id="NP_001338905.1">
    <molecule id="Q3LXA3-1"/>
    <property type="nucleotide sequence ID" value="NM_001351976.2"/>
</dbReference>
<dbReference type="RefSeq" id="NP_001338908.1">
    <molecule id="Q3LXA3-2"/>
    <property type="nucleotide sequence ID" value="NM_001351979.2"/>
</dbReference>
<dbReference type="RefSeq" id="NP_056348.2">
    <molecule id="Q3LXA3-1"/>
    <property type="nucleotide sequence ID" value="NM_015533.3"/>
</dbReference>
<dbReference type="RefSeq" id="XP_016873010.1">
    <property type="nucleotide sequence ID" value="XM_017017521.1"/>
</dbReference>
<dbReference type="RefSeq" id="XP_016873012.1">
    <property type="nucleotide sequence ID" value="XM_017017523.1"/>
</dbReference>
<dbReference type="RefSeq" id="XP_047282685.1">
    <molecule id="Q3LXA3-1"/>
    <property type="nucleotide sequence ID" value="XM_047426729.1"/>
</dbReference>
<dbReference type="RefSeq" id="XP_047282686.1">
    <molecule id="Q3LXA3-1"/>
    <property type="nucleotide sequence ID" value="XM_047426730.1"/>
</dbReference>
<dbReference type="RefSeq" id="XP_047282689.1">
    <molecule id="Q3LXA3-2"/>
    <property type="nucleotide sequence ID" value="XM_047426733.1"/>
</dbReference>
<dbReference type="RefSeq" id="XP_047282690.1">
    <molecule id="Q3LXA3-2"/>
    <property type="nucleotide sequence ID" value="XM_047426734.1"/>
</dbReference>
<dbReference type="RefSeq" id="XP_047282691.1">
    <molecule id="Q3LXA3-2"/>
    <property type="nucleotide sequence ID" value="XM_047426735.1"/>
</dbReference>
<dbReference type="SMR" id="Q3LXA3"/>
<dbReference type="BioGRID" id="117481">
    <property type="interactions" value="110"/>
</dbReference>
<dbReference type="DIP" id="DIP-60967N"/>
<dbReference type="FunCoup" id="Q3LXA3">
    <property type="interactions" value="1880"/>
</dbReference>
<dbReference type="IntAct" id="Q3LXA3">
    <property type="interactions" value="48"/>
</dbReference>
<dbReference type="STRING" id="9606.ENSP00000378360"/>
<dbReference type="GlyGen" id="Q3LXA3">
    <property type="glycosylation" value="1 site, 1 O-linked glycan (1 site)"/>
</dbReference>
<dbReference type="iPTMnet" id="Q3LXA3"/>
<dbReference type="PhosphoSitePlus" id="Q3LXA3"/>
<dbReference type="SwissPalm" id="Q3LXA3"/>
<dbReference type="BioMuta" id="TKFC"/>
<dbReference type="DMDM" id="311033370"/>
<dbReference type="REPRODUCTION-2DPAGE" id="IPI00551024"/>
<dbReference type="CPTAC" id="CPTAC-188"/>
<dbReference type="CPTAC" id="CPTAC-189"/>
<dbReference type="jPOST" id="Q3LXA3"/>
<dbReference type="MassIVE" id="Q3LXA3"/>
<dbReference type="PaxDb" id="9606-ENSP00000378360"/>
<dbReference type="PeptideAtlas" id="Q3LXA3"/>
<dbReference type="ProteomicsDB" id="61779">
    <molecule id="Q3LXA3-1"/>
</dbReference>
<dbReference type="Pumba" id="Q3LXA3"/>
<dbReference type="Antibodypedia" id="28186">
    <property type="antibodies" value="179 antibodies from 31 providers"/>
</dbReference>
<dbReference type="DNASU" id="26007"/>
<dbReference type="Ensembl" id="ENST00000394900.8">
    <molecule id="Q3LXA3-1"/>
    <property type="protein sequence ID" value="ENSP00000378360.3"/>
    <property type="gene ID" value="ENSG00000149476.16"/>
</dbReference>
<dbReference type="GeneID" id="26007"/>
<dbReference type="KEGG" id="hsa:26007"/>
<dbReference type="MANE-Select" id="ENST00000394900.8">
    <property type="protein sequence ID" value="ENSP00000378360.3"/>
    <property type="RefSeq nucleotide sequence ID" value="NM_015533.4"/>
    <property type="RefSeq protein sequence ID" value="NP_056348.2"/>
</dbReference>
<dbReference type="UCSC" id="uc001nre.4">
    <molecule id="Q3LXA3-1"/>
    <property type="organism name" value="human"/>
</dbReference>
<dbReference type="AGR" id="HGNC:24552"/>
<dbReference type="CTD" id="26007"/>
<dbReference type="DisGeNET" id="26007"/>
<dbReference type="GeneCards" id="TKFC"/>
<dbReference type="HGNC" id="HGNC:24552">
    <property type="gene designation" value="TKFC"/>
</dbReference>
<dbReference type="HPA" id="ENSG00000149476">
    <property type="expression patterns" value="Tissue enhanced (intestine, liver)"/>
</dbReference>
<dbReference type="MalaCards" id="TKFC"/>
<dbReference type="MIM" id="615844">
    <property type="type" value="gene"/>
</dbReference>
<dbReference type="MIM" id="618805">
    <property type="type" value="phenotype"/>
</dbReference>
<dbReference type="neXtProt" id="NX_Q3LXA3"/>
<dbReference type="OpenTargets" id="ENSG00000149476"/>
<dbReference type="Orphanet" id="1369">
    <property type="disease" value="Congenital cataract-hypertrophic cardiomyopathy-mitochondrial myopathy syndrome"/>
</dbReference>
<dbReference type="PharmGKB" id="PA142672014"/>
<dbReference type="VEuPathDB" id="HostDB:ENSG00000149476"/>
<dbReference type="eggNOG" id="KOG2426">
    <property type="taxonomic scope" value="Eukaryota"/>
</dbReference>
<dbReference type="GeneTree" id="ENSGT00390000015415"/>
<dbReference type="HOGENOM" id="CLU_017054_6_2_1"/>
<dbReference type="InParanoid" id="Q3LXA3"/>
<dbReference type="OMA" id="ALNMNGF"/>
<dbReference type="OrthoDB" id="1724672at2759"/>
<dbReference type="PAN-GO" id="Q3LXA3">
    <property type="GO annotations" value="3 GO annotations based on evolutionary models"/>
</dbReference>
<dbReference type="PhylomeDB" id="Q3LXA3"/>
<dbReference type="TreeFam" id="TF313821"/>
<dbReference type="BioCyc" id="MetaCyc:HS07615-MONOMER"/>
<dbReference type="BRENDA" id="2.7.1.28">
    <property type="organism ID" value="2681"/>
</dbReference>
<dbReference type="BRENDA" id="2.7.1.29">
    <property type="organism ID" value="2681"/>
</dbReference>
<dbReference type="BRENDA" id="4.6.1.15">
    <property type="organism ID" value="2681"/>
</dbReference>
<dbReference type="PathwayCommons" id="Q3LXA3"/>
<dbReference type="Reactome" id="R-HSA-168928">
    <property type="pathway name" value="DDX58/IFIH1-mediated induction of interferon-alpha/beta"/>
</dbReference>
<dbReference type="Reactome" id="R-HSA-70350">
    <property type="pathway name" value="Fructose catabolism"/>
</dbReference>
<dbReference type="Reactome" id="R-HSA-9692916">
    <property type="pathway name" value="SARS-CoV-1 activates/modulates innate immune responses"/>
</dbReference>
<dbReference type="Reactome" id="R-HSA-9705671">
    <property type="pathway name" value="SARS-CoV-2 activates/modulates innate and adaptive immune responses"/>
</dbReference>
<dbReference type="SignaLink" id="Q3LXA3"/>
<dbReference type="BioGRID-ORCS" id="26007">
    <property type="hits" value="12 hits in 1155 CRISPR screens"/>
</dbReference>
<dbReference type="ChiTaRS" id="TKFC">
    <property type="organism name" value="human"/>
</dbReference>
<dbReference type="GeneWiki" id="DAK_(gene)"/>
<dbReference type="GenomeRNAi" id="26007"/>
<dbReference type="Pharos" id="Q3LXA3">
    <property type="development level" value="Tbio"/>
</dbReference>
<dbReference type="PRO" id="PR:Q3LXA3"/>
<dbReference type="Proteomes" id="UP000005640">
    <property type="component" value="Chromosome 11"/>
</dbReference>
<dbReference type="RNAct" id="Q3LXA3">
    <property type="molecule type" value="protein"/>
</dbReference>
<dbReference type="Bgee" id="ENSG00000149476">
    <property type="expression patterns" value="Expressed in right adrenal gland cortex and 135 other cell types or tissues"/>
</dbReference>
<dbReference type="ExpressionAtlas" id="Q3LXA3">
    <property type="expression patterns" value="baseline and differential"/>
</dbReference>
<dbReference type="GO" id="GO:0005829">
    <property type="term" value="C:cytosol"/>
    <property type="evidence" value="ECO:0000318"/>
    <property type="project" value="GO_Central"/>
</dbReference>
<dbReference type="GO" id="GO:0070062">
    <property type="term" value="C:extracellular exosome"/>
    <property type="evidence" value="ECO:0007005"/>
    <property type="project" value="UniProtKB"/>
</dbReference>
<dbReference type="GO" id="GO:0005634">
    <property type="term" value="C:nucleus"/>
    <property type="evidence" value="ECO:0007005"/>
    <property type="project" value="UniProtKB"/>
</dbReference>
<dbReference type="GO" id="GO:0005524">
    <property type="term" value="F:ATP binding"/>
    <property type="evidence" value="ECO:0007669"/>
    <property type="project" value="UniProtKB-KW"/>
</dbReference>
<dbReference type="GO" id="GO:0034012">
    <property type="term" value="F:FAD-AMP lyase (cyclizing) activity"/>
    <property type="evidence" value="ECO:0000314"/>
    <property type="project" value="UniProtKB"/>
</dbReference>
<dbReference type="GO" id="GO:0004371">
    <property type="term" value="F:glycerone kinase activity"/>
    <property type="evidence" value="ECO:0000314"/>
    <property type="project" value="UniProtKB"/>
</dbReference>
<dbReference type="GO" id="GO:0046872">
    <property type="term" value="F:metal ion binding"/>
    <property type="evidence" value="ECO:0007669"/>
    <property type="project" value="UniProtKB-KW"/>
</dbReference>
<dbReference type="GO" id="GO:0050354">
    <property type="term" value="F:triokinase activity"/>
    <property type="evidence" value="ECO:0000314"/>
    <property type="project" value="UniProtKB"/>
</dbReference>
<dbReference type="GO" id="GO:0005975">
    <property type="term" value="P:carbohydrate metabolic process"/>
    <property type="evidence" value="ECO:0000314"/>
    <property type="project" value="UniProtKB"/>
</dbReference>
<dbReference type="GO" id="GO:0046835">
    <property type="term" value="P:carbohydrate phosphorylation"/>
    <property type="evidence" value="ECO:0000314"/>
    <property type="project" value="UniProtKB"/>
</dbReference>
<dbReference type="GO" id="GO:0061624">
    <property type="term" value="P:fructose catabolic process to hydroxyacetone phosphate and glyceraldehyde-3-phosphate"/>
    <property type="evidence" value="ECO:0007669"/>
    <property type="project" value="Ensembl"/>
</dbReference>
<dbReference type="GO" id="GO:0019563">
    <property type="term" value="P:glycerol catabolic process"/>
    <property type="evidence" value="ECO:0000318"/>
    <property type="project" value="GO_Central"/>
</dbReference>
<dbReference type="GO" id="GO:0039534">
    <property type="term" value="P:negative regulation of MDA-5 signaling pathway"/>
    <property type="evidence" value="ECO:0000314"/>
    <property type="project" value="UniProtKB"/>
</dbReference>
<dbReference type="GO" id="GO:0045088">
    <property type="term" value="P:regulation of innate immune response"/>
    <property type="evidence" value="ECO:0000314"/>
    <property type="project" value="UniProtKB"/>
</dbReference>
<dbReference type="FunFam" id="1.25.40.340:FF:000001">
    <property type="entry name" value="Dihydroxyacetone kinase 1"/>
    <property type="match status" value="1"/>
</dbReference>
<dbReference type="FunFam" id="3.40.50.10440:FF:000001">
    <property type="entry name" value="Dihydroxyacetone kinase, DhaK subunit"/>
    <property type="match status" value="1"/>
</dbReference>
<dbReference type="FunFam" id="3.30.1180.20:FF:000003">
    <property type="entry name" value="triokinase/FMN cyclase isoform X1"/>
    <property type="match status" value="1"/>
</dbReference>
<dbReference type="Gene3D" id="1.25.40.340">
    <property type="match status" value="1"/>
</dbReference>
<dbReference type="Gene3D" id="3.40.50.10440">
    <property type="entry name" value="Dihydroxyacetone kinase, domain 1"/>
    <property type="match status" value="1"/>
</dbReference>
<dbReference type="Gene3D" id="3.30.1180.20">
    <property type="entry name" value="Dihydroxyacetone kinase, domain 2"/>
    <property type="match status" value="1"/>
</dbReference>
<dbReference type="InterPro" id="IPR012734">
    <property type="entry name" value="DhaK_ATP"/>
</dbReference>
<dbReference type="InterPro" id="IPR004006">
    <property type="entry name" value="DhaK_dom"/>
</dbReference>
<dbReference type="InterPro" id="IPR004007">
    <property type="entry name" value="DhaL_dom"/>
</dbReference>
<dbReference type="InterPro" id="IPR036117">
    <property type="entry name" value="DhaL_dom_sf"/>
</dbReference>
<dbReference type="InterPro" id="IPR050861">
    <property type="entry name" value="Dihydroxyacetone_Kinase"/>
</dbReference>
<dbReference type="NCBIfam" id="TIGR02361">
    <property type="entry name" value="dak_ATP"/>
    <property type="match status" value="1"/>
</dbReference>
<dbReference type="NCBIfam" id="NF011049">
    <property type="entry name" value="PRK14479.1"/>
    <property type="match status" value="1"/>
</dbReference>
<dbReference type="PANTHER" id="PTHR28629">
    <property type="entry name" value="TRIOKINASE/FMN CYCLASE"/>
    <property type="match status" value="1"/>
</dbReference>
<dbReference type="PANTHER" id="PTHR28629:SF4">
    <property type="entry name" value="TRIOKINASE_FMN CYCLASE"/>
    <property type="match status" value="1"/>
</dbReference>
<dbReference type="Pfam" id="PF02733">
    <property type="entry name" value="Dak1"/>
    <property type="match status" value="1"/>
</dbReference>
<dbReference type="Pfam" id="PF02734">
    <property type="entry name" value="Dak2"/>
    <property type="match status" value="1"/>
</dbReference>
<dbReference type="SMART" id="SM01120">
    <property type="entry name" value="Dak2"/>
    <property type="match status" value="1"/>
</dbReference>
<dbReference type="SUPFAM" id="SSF82549">
    <property type="entry name" value="DAK1/DegV-like"/>
    <property type="match status" value="1"/>
</dbReference>
<dbReference type="SUPFAM" id="SSF101473">
    <property type="entry name" value="DhaL-like"/>
    <property type="match status" value="1"/>
</dbReference>
<dbReference type="PROSITE" id="PS51481">
    <property type="entry name" value="DHAK"/>
    <property type="match status" value="1"/>
</dbReference>
<dbReference type="PROSITE" id="PS51480">
    <property type="entry name" value="DHAL"/>
    <property type="match status" value="1"/>
</dbReference>
<comment type="function">
    <text evidence="2 3 8 9 11 12">Catalyzes both the phosphorylation of dihydroxyacetone and of glyceraldehyde, and the splitting of ribonucleoside diphosphate-X compounds among which FAD is the best substrate. Represses IFIH1-mediated cellular antiviral response (PubMed:17600090).</text>
</comment>
<comment type="catalytic activity">
    <reaction evidence="11 12">
        <text>dihydroxyacetone + ATP = dihydroxyacetone phosphate + ADP + H(+)</text>
        <dbReference type="Rhea" id="RHEA:15773"/>
        <dbReference type="ChEBI" id="CHEBI:15378"/>
        <dbReference type="ChEBI" id="CHEBI:16016"/>
        <dbReference type="ChEBI" id="CHEBI:30616"/>
        <dbReference type="ChEBI" id="CHEBI:57642"/>
        <dbReference type="ChEBI" id="CHEBI:456216"/>
        <dbReference type="EC" id="2.7.1.29"/>
    </reaction>
</comment>
<comment type="catalytic activity">
    <reaction evidence="11 12">
        <text>D-glyceraldehyde + ATP = D-glyceraldehyde 3-phosphate + ADP + H(+)</text>
        <dbReference type="Rhea" id="RHEA:13941"/>
        <dbReference type="ChEBI" id="CHEBI:15378"/>
        <dbReference type="ChEBI" id="CHEBI:17378"/>
        <dbReference type="ChEBI" id="CHEBI:30616"/>
        <dbReference type="ChEBI" id="CHEBI:59776"/>
        <dbReference type="ChEBI" id="CHEBI:456216"/>
        <dbReference type="EC" id="2.7.1.28"/>
    </reaction>
</comment>
<comment type="catalytic activity">
    <reaction evidence="12">
        <text>FAD = riboflavin cyclic-4',5'-phosphate + AMP + H(+)</text>
        <dbReference type="Rhea" id="RHEA:13729"/>
        <dbReference type="ChEBI" id="CHEBI:15378"/>
        <dbReference type="ChEBI" id="CHEBI:57692"/>
        <dbReference type="ChEBI" id="CHEBI:76202"/>
        <dbReference type="ChEBI" id="CHEBI:456215"/>
        <dbReference type="EC" id="4.6.1.15"/>
    </reaction>
</comment>
<comment type="cofactor">
    <cofactor evidence="1">
        <name>Mg(2+)</name>
        <dbReference type="ChEBI" id="CHEBI:18420"/>
    </cofactor>
</comment>
<comment type="cofactor">
    <cofactor evidence="1">
        <name>Mn(2+)</name>
        <dbReference type="ChEBI" id="CHEBI:29035"/>
    </cofactor>
    <cofactor evidence="1">
        <name>Co(2+)</name>
        <dbReference type="ChEBI" id="CHEBI:48828"/>
    </cofactor>
    <text evidence="1">Manganese or cobalt are requested for FAD-AMP lyase activity.</text>
</comment>
<comment type="activity regulation">
    <text>Each activity is inhibited by the substrate(s) of the other.</text>
</comment>
<comment type="biophysicochemical properties">
    <kinetics>
        <KM evidence="12">0.5 uM for dihydroxyacetone</KM>
        <KM evidence="12">11 uM for glyceraldehyde</KM>
        <KM evidence="10">1.55 uM for dihydroxyacetone</KM>
        <KM evidence="10">43.2 uM for ATP</KM>
        <KM evidence="10">18.1 uM for glyceraldehyde</KM>
        <KM evidence="10">7 uM for FAD</KM>
        <KM evidence="10">12 uM for ADP-glucose</KM>
        <KM evidence="10">317 uM for UDP-glucose</KM>
        <KM evidence="10">263 uM for UDP-galactose</KM>
    </kinetics>
    <phDependence>
        <text evidence="12">Optimum pH is 6.6.</text>
    </phDependence>
</comment>
<comment type="subunit">
    <text evidence="2 9">Homodimer (By similarity). Interacts with IFIH1 (via the CARD domains), the interaction is inhibited by viral infection (PubMed:17600090).</text>
</comment>
<comment type="interaction">
    <interactant intactId="EBI-4291069">
        <id>Q3LXA3</id>
    </interactant>
    <interactant intactId="EBI-6115771">
        <id>Q9BYX4</id>
        <label>IFIH1</label>
    </interactant>
    <organismsDiffer>false</organismsDiffer>
    <experiments>5</experiments>
</comment>
<comment type="interaction">
    <interactant intactId="EBI-4291069">
        <id>Q3LXA3</id>
    </interactant>
    <interactant intactId="EBI-727004">
        <id>O00560</id>
        <label>SDCBP</label>
    </interactant>
    <organismsDiffer>false</organismsDiffer>
    <experiments>3</experiments>
</comment>
<comment type="alternative products">
    <event type="alternative splicing"/>
    <isoform>
        <id>Q3LXA3-1</id>
        <name>1</name>
        <sequence type="displayed"/>
    </isoform>
    <isoform>
        <id>Q3LXA3-2</id>
        <name>2</name>
        <sequence type="described" ref="VSP_057181"/>
    </isoform>
</comment>
<comment type="tissue specificity">
    <text evidence="12">Detected in erythrocytes (at protein level).</text>
</comment>
<comment type="domain">
    <text evidence="10">DhaK and DhaL domains have differential roles, individually DhaK is inactive and DhaL displays cyclase but not kinase activity.</text>
</comment>
<comment type="disease" evidence="11">
    <disease id="DI-05786">
        <name>Triokinase and FMN cyclase deficiency syndrome</name>
        <acronym>TKFCD</acronym>
        <description>An autosomal recessive disease characterized by cataracts and developmental delay that may be associated with cerebellar hypoplasia. Additional features may include liver dysfunction, microcytic anemia, and fatal cardiomyopathy with lactic acidosis following a febrile illness.</description>
        <dbReference type="MIM" id="618805"/>
    </disease>
    <text>The disease is caused by variants affecting the gene represented in this entry.</text>
</comment>
<comment type="miscellaneous">
    <molecule>Isoform 2</molecule>
    <text evidence="16">Inactive as DHA kinase and FMN cyclase.</text>
</comment>
<comment type="similarity">
    <text evidence="16">Belongs to the dihydroxyacetone kinase (DAK) family.</text>
</comment>
<evidence type="ECO:0000250" key="1"/>
<evidence type="ECO:0000250" key="2">
    <source>
        <dbReference type="UniProtKB" id="F1RKQ4"/>
    </source>
</evidence>
<evidence type="ECO:0000250" key="3">
    <source>
        <dbReference type="UniProtKB" id="Q4KLZ6"/>
    </source>
</evidence>
<evidence type="ECO:0000255" key="4">
    <source>
        <dbReference type="PROSITE-ProRule" id="PRU00813"/>
    </source>
</evidence>
<evidence type="ECO:0000255" key="5">
    <source>
        <dbReference type="PROSITE-ProRule" id="PRU00814"/>
    </source>
</evidence>
<evidence type="ECO:0000256" key="6">
    <source>
        <dbReference type="SAM" id="MobiDB-lite"/>
    </source>
</evidence>
<evidence type="ECO:0000269" key="7">
    <source>
    </source>
</evidence>
<evidence type="ECO:0000269" key="8">
    <source>
    </source>
</evidence>
<evidence type="ECO:0000269" key="9">
    <source>
    </source>
</evidence>
<evidence type="ECO:0000269" key="10">
    <source>
    </source>
</evidence>
<evidence type="ECO:0000269" key="11">
    <source>
    </source>
</evidence>
<evidence type="ECO:0000269" key="12">
    <source>
    </source>
</evidence>
<evidence type="ECO:0000269" key="13">
    <source ref="2"/>
</evidence>
<evidence type="ECO:0000269" key="14">
    <source ref="4"/>
</evidence>
<evidence type="ECO:0000303" key="15">
    <source ref="2"/>
</evidence>
<evidence type="ECO:0000305" key="16"/>
<evidence type="ECO:0000312" key="17">
    <source>
        <dbReference type="HGNC" id="HGNC:24552"/>
    </source>
</evidence>
<evidence type="ECO:0007744" key="18">
    <source>
    </source>
</evidence>
<reference key="1">
    <citation type="journal article" date="2005" name="Biochem. Biophys. Res. Commun.">
        <title>Identification of human and rat FAD-AMP lyase (cyclic FMN forming) as ATP-dependent dihydroxyacetone kinases.</title>
        <authorList>
            <person name="Cabezas A."/>
            <person name="Costas M.J."/>
            <person name="Pinto R.M."/>
            <person name="Couto A."/>
            <person name="Cameselle J.C."/>
        </authorList>
    </citation>
    <scope>NUCLEOTIDE SEQUENCE [MRNA] (ISOFORM 1)</scope>
    <scope>FUNCTION</scope>
    <scope>FAD-AMP LYASE ACTIVITY</scope>
    <scope>VARIANT THR-185</scope>
    <source>
        <tissue>Brain</tissue>
    </source>
</reference>
<reference key="2">
    <citation type="submission" date="2005-12" db="EMBL/GenBank/DDBJ databases">
        <title>Human brain Dha kinase/FMN cyclase splice variant mRNA encoding a shorter protein inactive as Dha kinase and FMN cyclase.</title>
        <authorList>
            <person name="Cabezas A."/>
            <person name="Costas M.J."/>
            <person name="Pinto R.M."/>
            <person name="Couto A."/>
            <person name="Cameselle J.C."/>
        </authorList>
    </citation>
    <scope>NUCLEOTIDE SEQUENCE [MRNA] (ISOFORM 2)</scope>
    <scope>VARIANT THR-185</scope>
    <scope>ALTERNATIVE SPLICING</scope>
    <source>
        <tissue>Brain</tissue>
    </source>
</reference>
<reference key="3">
    <citation type="journal article" date="2004" name="Nat. Genet.">
        <title>Complete sequencing and characterization of 21,243 full-length human cDNAs.</title>
        <authorList>
            <person name="Ota T."/>
            <person name="Suzuki Y."/>
            <person name="Nishikawa T."/>
            <person name="Otsuki T."/>
            <person name="Sugiyama T."/>
            <person name="Irie R."/>
            <person name="Wakamatsu A."/>
            <person name="Hayashi K."/>
            <person name="Sato H."/>
            <person name="Nagai K."/>
            <person name="Kimura K."/>
            <person name="Makita H."/>
            <person name="Sekine M."/>
            <person name="Obayashi M."/>
            <person name="Nishi T."/>
            <person name="Shibahara T."/>
            <person name="Tanaka T."/>
            <person name="Ishii S."/>
            <person name="Yamamoto J."/>
            <person name="Saito K."/>
            <person name="Kawai Y."/>
            <person name="Isono Y."/>
            <person name="Nakamura Y."/>
            <person name="Nagahari K."/>
            <person name="Murakami K."/>
            <person name="Yasuda T."/>
            <person name="Iwayanagi T."/>
            <person name="Wagatsuma M."/>
            <person name="Shiratori A."/>
            <person name="Sudo H."/>
            <person name="Hosoiri T."/>
            <person name="Kaku Y."/>
            <person name="Kodaira H."/>
            <person name="Kondo H."/>
            <person name="Sugawara M."/>
            <person name="Takahashi M."/>
            <person name="Kanda K."/>
            <person name="Yokoi T."/>
            <person name="Furuya T."/>
            <person name="Kikkawa E."/>
            <person name="Omura Y."/>
            <person name="Abe K."/>
            <person name="Kamihara K."/>
            <person name="Katsuta N."/>
            <person name="Sato K."/>
            <person name="Tanikawa M."/>
            <person name="Yamazaki M."/>
            <person name="Ninomiya K."/>
            <person name="Ishibashi T."/>
            <person name="Yamashita H."/>
            <person name="Murakawa K."/>
            <person name="Fujimori K."/>
            <person name="Tanai H."/>
            <person name="Kimata M."/>
            <person name="Watanabe M."/>
            <person name="Hiraoka S."/>
            <person name="Chiba Y."/>
            <person name="Ishida S."/>
            <person name="Ono Y."/>
            <person name="Takiguchi S."/>
            <person name="Watanabe S."/>
            <person name="Yosida M."/>
            <person name="Hotuta T."/>
            <person name="Kusano J."/>
            <person name="Kanehori K."/>
            <person name="Takahashi-Fujii A."/>
            <person name="Hara H."/>
            <person name="Tanase T.-O."/>
            <person name="Nomura Y."/>
            <person name="Togiya S."/>
            <person name="Komai F."/>
            <person name="Hara R."/>
            <person name="Takeuchi K."/>
            <person name="Arita M."/>
            <person name="Imose N."/>
            <person name="Musashino K."/>
            <person name="Yuuki H."/>
            <person name="Oshima A."/>
            <person name="Sasaki N."/>
            <person name="Aotsuka S."/>
            <person name="Yoshikawa Y."/>
            <person name="Matsunawa H."/>
            <person name="Ichihara T."/>
            <person name="Shiohata N."/>
            <person name="Sano S."/>
            <person name="Moriya S."/>
            <person name="Momiyama H."/>
            <person name="Satoh N."/>
            <person name="Takami S."/>
            <person name="Terashima Y."/>
            <person name="Suzuki O."/>
            <person name="Nakagawa S."/>
            <person name="Senoh A."/>
            <person name="Mizoguchi H."/>
            <person name="Goto Y."/>
            <person name="Shimizu F."/>
            <person name="Wakebe H."/>
            <person name="Hishigaki H."/>
            <person name="Watanabe T."/>
            <person name="Sugiyama A."/>
            <person name="Takemoto M."/>
            <person name="Kawakami B."/>
            <person name="Yamazaki M."/>
            <person name="Watanabe K."/>
            <person name="Kumagai A."/>
            <person name="Itakura S."/>
            <person name="Fukuzumi Y."/>
            <person name="Fujimori Y."/>
            <person name="Komiyama M."/>
            <person name="Tashiro H."/>
            <person name="Tanigami A."/>
            <person name="Fujiwara T."/>
            <person name="Ono T."/>
            <person name="Yamada K."/>
            <person name="Fujii Y."/>
            <person name="Ozaki K."/>
            <person name="Hirao M."/>
            <person name="Ohmori Y."/>
            <person name="Kawabata A."/>
            <person name="Hikiji T."/>
            <person name="Kobatake N."/>
            <person name="Inagaki H."/>
            <person name="Ikema Y."/>
            <person name="Okamoto S."/>
            <person name="Okitani R."/>
            <person name="Kawakami T."/>
            <person name="Noguchi S."/>
            <person name="Itoh T."/>
            <person name="Shigeta K."/>
            <person name="Senba T."/>
            <person name="Matsumura K."/>
            <person name="Nakajima Y."/>
            <person name="Mizuno T."/>
            <person name="Morinaga M."/>
            <person name="Sasaki M."/>
            <person name="Togashi T."/>
            <person name="Oyama M."/>
            <person name="Hata H."/>
            <person name="Watanabe M."/>
            <person name="Komatsu T."/>
            <person name="Mizushima-Sugano J."/>
            <person name="Satoh T."/>
            <person name="Shirai Y."/>
            <person name="Takahashi Y."/>
            <person name="Nakagawa K."/>
            <person name="Okumura K."/>
            <person name="Nagase T."/>
            <person name="Nomura N."/>
            <person name="Kikuchi H."/>
            <person name="Masuho Y."/>
            <person name="Yamashita R."/>
            <person name="Nakai K."/>
            <person name="Yada T."/>
            <person name="Nakamura Y."/>
            <person name="Ohara O."/>
            <person name="Isogai T."/>
            <person name="Sugano S."/>
        </authorList>
    </citation>
    <scope>NUCLEOTIDE SEQUENCE [LARGE SCALE MRNA] (ISOFORM 1)</scope>
    <scope>VARIANT THR-185</scope>
    <source>
        <tissue>Thyroid</tissue>
    </source>
</reference>
<reference key="4">
    <citation type="submission" date="2005-04" db="EMBL/GenBank/DDBJ databases">
        <authorList>
            <person name="Totoki Y."/>
            <person name="Toyoda A."/>
            <person name="Takeda T."/>
            <person name="Sakaki Y."/>
            <person name="Tanaka A."/>
            <person name="Yokoyama S."/>
        </authorList>
    </citation>
    <scope>NUCLEOTIDE SEQUENCE [LARGE SCALE MRNA] (ISOFORM 1)</scope>
    <scope>VARIANT THR-185</scope>
    <source>
        <tissue>Kidney</tissue>
    </source>
</reference>
<reference key="5">
    <citation type="journal article" date="2006" name="Nature">
        <title>Human chromosome 11 DNA sequence and analysis including novel gene identification.</title>
        <authorList>
            <person name="Taylor T.D."/>
            <person name="Noguchi H."/>
            <person name="Totoki Y."/>
            <person name="Toyoda A."/>
            <person name="Kuroki Y."/>
            <person name="Dewar K."/>
            <person name="Lloyd C."/>
            <person name="Itoh T."/>
            <person name="Takeda T."/>
            <person name="Kim D.-W."/>
            <person name="She X."/>
            <person name="Barlow K.F."/>
            <person name="Bloom T."/>
            <person name="Bruford E."/>
            <person name="Chang J.L."/>
            <person name="Cuomo C.A."/>
            <person name="Eichler E."/>
            <person name="FitzGerald M.G."/>
            <person name="Jaffe D.B."/>
            <person name="LaButti K."/>
            <person name="Nicol R."/>
            <person name="Park H.-S."/>
            <person name="Seaman C."/>
            <person name="Sougnez C."/>
            <person name="Yang X."/>
            <person name="Zimmer A.R."/>
            <person name="Zody M.C."/>
            <person name="Birren B.W."/>
            <person name="Nusbaum C."/>
            <person name="Fujiyama A."/>
            <person name="Hattori M."/>
            <person name="Rogers J."/>
            <person name="Lander E.S."/>
            <person name="Sakaki Y."/>
        </authorList>
    </citation>
    <scope>NUCLEOTIDE SEQUENCE [LARGE SCALE GENOMIC DNA]</scope>
</reference>
<reference key="6">
    <citation type="journal article" date="2004" name="Genome Res.">
        <title>The status, quality, and expansion of the NIH full-length cDNA project: the Mammalian Gene Collection (MGC).</title>
        <authorList>
            <consortium name="The MGC Project Team"/>
        </authorList>
    </citation>
    <scope>NUCLEOTIDE SEQUENCE [LARGE SCALE MRNA] (ISOFORM 1)</scope>
    <source>
        <tissue>Cervix</tissue>
    </source>
</reference>
<reference key="7">
    <citation type="journal article" date="1973" name="Blood">
        <title>Dihydroxyacetone metabolism by human erythrocytes: demonstration of triokinase activity and its characterization.</title>
        <authorList>
            <person name="Beutler E."/>
            <person name="Guinto E."/>
        </authorList>
    </citation>
    <scope>CATALYTIC ACTIVITY</scope>
    <scope>FUNCTION</scope>
    <scope>IDENTITY OF TRIOKINASE AND DIHYDROXYACETONE KINASE</scope>
    <scope>BIOPHYSICOCHEMICAL PROPERTIES</scope>
    <scope>TISSUE SPECIFICITY</scope>
</reference>
<reference key="8">
    <citation type="journal article" date="2007" name="Proc. Natl. Acad. Sci. U.S.A.">
        <title>Negative regulation of MDA5- but not RIG-I-mediated innate antiviral signaling by the dihydroxyacetone kinase.</title>
        <authorList>
            <person name="Diao F."/>
            <person name="Li S."/>
            <person name="Tian Y."/>
            <person name="Zhang M."/>
            <person name="Xu L.G."/>
            <person name="Zhang Y."/>
            <person name="Wang R.P."/>
            <person name="Chen D."/>
            <person name="Zhai Z."/>
            <person name="Zhong B."/>
            <person name="Tien P."/>
            <person name="Shu H.B."/>
        </authorList>
    </citation>
    <scope>INTERACTION WITH IFIH1</scope>
</reference>
<reference key="9">
    <citation type="journal article" date="2011" name="BMC Syst. Biol.">
        <title>Initial characterization of the human central proteome.</title>
        <authorList>
            <person name="Burkard T.R."/>
            <person name="Planyavsky M."/>
            <person name="Kaupe I."/>
            <person name="Breitwieser F.P."/>
            <person name="Buerckstuemmer T."/>
            <person name="Bennett K.L."/>
            <person name="Superti-Furga G."/>
            <person name="Colinge J."/>
        </authorList>
    </citation>
    <scope>IDENTIFICATION BY MASS SPECTROMETRY [LARGE SCALE ANALYSIS]</scope>
</reference>
<reference key="10">
    <citation type="journal article" date="2014" name="J. Biol. Chem.">
        <title>Bifunctional homodimeric triokinase/FMN cyclase: contribution of protein domains to the activities of the human enzyme and molecular dynamics simulation of domain movements.</title>
        <authorList>
            <person name="Rodrigues J.R."/>
            <person name="Couto A."/>
            <person name="Cabezas A."/>
            <person name="Pinto R.M."/>
            <person name="Ribeiro J.M."/>
            <person name="Canales J."/>
            <person name="Costas M.J."/>
            <person name="Cameselle J.C."/>
        </authorList>
    </citation>
    <scope>FUNCTION</scope>
    <scope>BIOPHYSICOCHEMICAL PROPERTIES</scope>
    <scope>DOMAIN</scope>
    <scope>MUTAGENESIS OF THR-112; LYS-204; HIS-221; ASP-401; ASP-403; CYS-404; SER-446 AND ASP-556</scope>
</reference>
<reference key="11">
    <citation type="journal article" date="2014" name="J. Proteomics">
        <title>An enzyme assisted RP-RPLC approach for in-depth analysis of human liver phosphoproteome.</title>
        <authorList>
            <person name="Bian Y."/>
            <person name="Song C."/>
            <person name="Cheng K."/>
            <person name="Dong M."/>
            <person name="Wang F."/>
            <person name="Huang J."/>
            <person name="Sun D."/>
            <person name="Wang L."/>
            <person name="Ye M."/>
            <person name="Zou H."/>
        </authorList>
    </citation>
    <scope>PHOSPHORYLATION [LARGE SCALE ANALYSIS] AT SER-350 AND SER-511</scope>
    <scope>IDENTIFICATION BY MASS SPECTROMETRY [LARGE SCALE ANALYSIS]</scope>
    <source>
        <tissue>Liver</tissue>
    </source>
</reference>
<reference key="12">
    <citation type="journal article" date="2020" name="Am. J. Hum. Genet.">
        <title>Bi-allelic variants in TKFC encoding triokinase/FMN cyclase are associated with cataracts and multisystem disease.</title>
        <authorList>
            <person name="Wortmann S.B."/>
            <person name="Meunier B."/>
            <person name="Mestek-Boukhibar L."/>
            <person name="van den Broek F."/>
            <person name="Maldonado E.M."/>
            <person name="Clement E."/>
            <person name="Weghuber D."/>
            <person name="Spenger J."/>
            <person name="Jaros Z."/>
            <person name="Taha F."/>
            <person name="Yue W.W."/>
            <person name="Heales S.J."/>
            <person name="Davison J.E."/>
            <person name="Mayr J.A."/>
            <person name="Rahman S."/>
        </authorList>
    </citation>
    <scope>INVOLVEMENT IN TKFCD</scope>
    <scope>FUNCTION</scope>
    <scope>CATALYTIC ACTIVITY</scope>
    <scope>VARIANTS TKFCD SER-445 AND ILE-543</scope>
    <scope>CHARACTERIZATION OF VARIANTS TKFCD SER-445 AND ILE-543</scope>
</reference>
<proteinExistence type="evidence at protein level"/>
<organism>
    <name type="scientific">Homo sapiens</name>
    <name type="common">Human</name>
    <dbReference type="NCBI Taxonomy" id="9606"/>
    <lineage>
        <taxon>Eukaryota</taxon>
        <taxon>Metazoa</taxon>
        <taxon>Chordata</taxon>
        <taxon>Craniata</taxon>
        <taxon>Vertebrata</taxon>
        <taxon>Euteleostomi</taxon>
        <taxon>Mammalia</taxon>
        <taxon>Eutheria</taxon>
        <taxon>Euarchontoglires</taxon>
        <taxon>Primates</taxon>
        <taxon>Haplorrhini</taxon>
        <taxon>Catarrhini</taxon>
        <taxon>Hominidae</taxon>
        <taxon>Homo</taxon>
    </lineage>
</organism>
<gene>
    <name evidence="17" type="primary">TKFC</name>
    <name evidence="17" type="synonym">DAK</name>
</gene>
<keyword id="KW-0025">Alternative splicing</keyword>
<keyword id="KW-0067">ATP-binding</keyword>
<keyword id="KW-0898">Cataract</keyword>
<keyword id="KW-0170">Cobalt</keyword>
<keyword id="KW-0274">FAD</keyword>
<keyword id="KW-0285">Flavoprotein</keyword>
<keyword id="KW-0418">Kinase</keyword>
<keyword id="KW-0456">Lyase</keyword>
<keyword id="KW-0460">Magnesium</keyword>
<keyword id="KW-0464">Manganese</keyword>
<keyword id="KW-0479">Metal-binding</keyword>
<keyword id="KW-0511">Multifunctional enzyme</keyword>
<keyword id="KW-0547">Nucleotide-binding</keyword>
<keyword id="KW-0597">Phosphoprotein</keyword>
<keyword id="KW-1267">Proteomics identification</keyword>
<keyword id="KW-1185">Reference proteome</keyword>
<keyword id="KW-0808">Transferase</keyword>
<sequence>MTSKKLVNSVAGCADDALAGLVACNPNLQLLQGHRVALRSDLDSLKGRVALLSGGGSGHEPAHAGFIGKGMLTGVIAGAVFTSPAVGSILAAIRAVAQAGTVGTLLIVKNYTGDRLNFGLAREQARAEGIPVEMVVIGDDSAFTVLKKAGRRGLCGTVLIHKVAGALAEAGVGLEEIAKQVNVVAKAMGTLGVSLSSCSVPGSKPTFELSADEVELGLGIHGEAGVRRIKMATADEIVKLMLDHMTNTTNASHVPVQPGSSVVMMVNNLGGLSFLELGIIADATVRSLEGRGVKIARALVGTFMSALEMPGISLTLLLVDEPLLKLIDAETTAAAWPNVAAVSITGRKRSRVAPAEPQEAPDSTAAGGSASKRMALVLERVCSTLLGLEEHLNALDRAAGDGDCGTTHSRAARAIQEWLKEGPPPASPAQLLSKLSVLLLEKMGGSSGALYGLFLTAAAQPLKAKTSLPAWSAAMDAGLEAMQKYGKAAPGDRTMLDSLWAAGQELQAWKSPGADLLQVLTKAVKSAEAAAEATKNMEAGAGRASYISSARLEQPDPGAVAAAAILRAILEVLQS</sequence>